<protein>
    <recommendedName>
        <fullName>High osmolarity signaling protein SHO1</fullName>
    </recommendedName>
    <alternativeName>
        <fullName>Osmosensor SHO1</fullName>
    </alternativeName>
    <alternativeName>
        <fullName>Suppressor of SUA8-1 mutation</fullName>
    </alternativeName>
    <alternativeName>
        <fullName>Synthetic high osmolarity-sensitive protein 1</fullName>
    </alternativeName>
</protein>
<keyword id="KW-1003">Cell membrane</keyword>
<keyword id="KW-0966">Cell projection</keyword>
<keyword id="KW-0325">Glycoprotein</keyword>
<keyword id="KW-0472">Membrane</keyword>
<keyword id="KW-0597">Phosphoprotein</keyword>
<keyword id="KW-0728">SH3 domain</keyword>
<keyword id="KW-0346">Stress response</keyword>
<keyword id="KW-0812">Transmembrane</keyword>
<keyword id="KW-1133">Transmembrane helix</keyword>
<accession>C7GKW5</accession>
<organism>
    <name type="scientific">Saccharomyces cerevisiae (strain JAY291)</name>
    <name type="common">Baker's yeast</name>
    <dbReference type="NCBI Taxonomy" id="574961"/>
    <lineage>
        <taxon>Eukaryota</taxon>
        <taxon>Fungi</taxon>
        <taxon>Dikarya</taxon>
        <taxon>Ascomycota</taxon>
        <taxon>Saccharomycotina</taxon>
        <taxon>Saccharomycetes</taxon>
        <taxon>Saccharomycetales</taxon>
        <taxon>Saccharomycetaceae</taxon>
        <taxon>Saccharomyces</taxon>
    </lineage>
</organism>
<gene>
    <name type="primary">SHO1</name>
    <name type="synonym">SSU81</name>
    <name type="ORF">C1Q_00869</name>
</gene>
<comment type="function">
    <text evidence="1">Plasma membrane osmosensor that activates the high osmolarity glycerol (HOG) MAPK signaling pathway in response to high osmolarity. Detects changes in external osmolarity and activates PBS2 through the stimulation of STE11 and targets PBS2 to the plasma membrane. PBS2 activation leads to changes in glycerol production that helps to balance the intracellular and external osmotic pressures. Activates also HOG1 in response to heat stress and mediates resistance to oxidative stress. Involved in the regulation of the mating pathway. May be a receptor that feeds into the pseudohyphal growth pathway (By similarity).</text>
</comment>
<comment type="subunit">
    <text evidence="1">Forms homooligomers (By similarity). Interacts (via the SH3 domain) with PBS2. Interacts with FUS1, STE11, STE50 and RNA polymerase II (By similarity).</text>
</comment>
<comment type="subcellular location">
    <subcellularLocation>
        <location evidence="1">Cell membrane</location>
        <topology evidence="1">Multi-pass membrane protein</topology>
    </subcellularLocation>
    <subcellularLocation>
        <location evidence="1">Bud</location>
    </subcellularLocation>
    <subcellularLocation>
        <location evidence="1">Bud neck</location>
    </subcellularLocation>
    <subcellularLocation>
        <location evidence="1">Cell projection</location>
    </subcellularLocation>
    <text evidence="1">Localizes at the tip of the mating projection during conjugation.</text>
</comment>
<comment type="similarity">
    <text evidence="6">Belongs to the SHO1 family.</text>
</comment>
<dbReference type="EMBL" id="ACFL01000028">
    <property type="protein sequence ID" value="EEU08550.1"/>
    <property type="molecule type" value="Genomic_DNA"/>
</dbReference>
<dbReference type="SMR" id="C7GKW5"/>
<dbReference type="GlyCosmos" id="C7GKW5">
    <property type="glycosylation" value="1 site, No reported glycans"/>
</dbReference>
<dbReference type="Proteomes" id="UP000008073">
    <property type="component" value="Unassembled WGS sequence"/>
</dbReference>
<dbReference type="GO" id="GO:0042995">
    <property type="term" value="C:cell projection"/>
    <property type="evidence" value="ECO:0007669"/>
    <property type="project" value="UniProtKB-SubCell"/>
</dbReference>
<dbReference type="GO" id="GO:0005935">
    <property type="term" value="C:cellular bud neck"/>
    <property type="evidence" value="ECO:0007669"/>
    <property type="project" value="UniProtKB-SubCell"/>
</dbReference>
<dbReference type="GO" id="GO:0005886">
    <property type="term" value="C:plasma membrane"/>
    <property type="evidence" value="ECO:0007669"/>
    <property type="project" value="UniProtKB-SubCell"/>
</dbReference>
<dbReference type="GO" id="GO:0030833">
    <property type="term" value="P:regulation of actin filament polymerization"/>
    <property type="evidence" value="ECO:0007669"/>
    <property type="project" value="TreeGrafter"/>
</dbReference>
<dbReference type="CDD" id="cd11855">
    <property type="entry name" value="SH3_Sho1p"/>
    <property type="match status" value="1"/>
</dbReference>
<dbReference type="FunFam" id="2.30.30.40:FF:000213">
    <property type="entry name" value="High osmolarity signaling protein SHO1"/>
    <property type="match status" value="1"/>
</dbReference>
<dbReference type="Gene3D" id="2.30.30.40">
    <property type="entry name" value="SH3 Domains"/>
    <property type="match status" value="1"/>
</dbReference>
<dbReference type="InterPro" id="IPR036028">
    <property type="entry name" value="SH3-like_dom_sf"/>
</dbReference>
<dbReference type="InterPro" id="IPR001452">
    <property type="entry name" value="SH3_domain"/>
</dbReference>
<dbReference type="InterPro" id="IPR035522">
    <property type="entry name" value="Sho1_SH3"/>
</dbReference>
<dbReference type="PANTHER" id="PTHR15735">
    <property type="entry name" value="FCH AND DOUBLE SH3 DOMAINS PROTEIN"/>
    <property type="match status" value="1"/>
</dbReference>
<dbReference type="PANTHER" id="PTHR15735:SF20">
    <property type="entry name" value="HIGH OSMOLARITY SIGNALING PROTEIN SHO1"/>
    <property type="match status" value="1"/>
</dbReference>
<dbReference type="Pfam" id="PF00018">
    <property type="entry name" value="SH3_1"/>
    <property type="match status" value="1"/>
</dbReference>
<dbReference type="PRINTS" id="PR00452">
    <property type="entry name" value="SH3DOMAIN"/>
</dbReference>
<dbReference type="SMART" id="SM00326">
    <property type="entry name" value="SH3"/>
    <property type="match status" value="1"/>
</dbReference>
<dbReference type="SUPFAM" id="SSF50044">
    <property type="entry name" value="SH3-domain"/>
    <property type="match status" value="1"/>
</dbReference>
<dbReference type="PROSITE" id="PS50002">
    <property type="entry name" value="SH3"/>
    <property type="match status" value="1"/>
</dbReference>
<feature type="chain" id="PRO_0000410409" description="High osmolarity signaling protein SHO1">
    <location>
        <begin position="1"/>
        <end position="367"/>
    </location>
</feature>
<feature type="topological domain" description="Cytoplasmic" evidence="3">
    <location>
        <begin position="1"/>
        <end position="32"/>
    </location>
</feature>
<feature type="transmembrane region" description="Helical" evidence="3">
    <location>
        <begin position="33"/>
        <end position="53"/>
    </location>
</feature>
<feature type="topological domain" description="Extracellular" evidence="3">
    <location>
        <begin position="54"/>
        <end position="65"/>
    </location>
</feature>
<feature type="transmembrane region" description="Helical" evidence="3">
    <location>
        <begin position="66"/>
        <end position="86"/>
    </location>
</feature>
<feature type="topological domain" description="Cytoplasmic" evidence="3">
    <location>
        <begin position="87"/>
        <end position="93"/>
    </location>
</feature>
<feature type="transmembrane region" description="Helical" evidence="3">
    <location>
        <begin position="94"/>
        <end position="114"/>
    </location>
</feature>
<feature type="topological domain" description="Extracellular" evidence="3">
    <location>
        <begin position="115"/>
        <end position="122"/>
    </location>
</feature>
<feature type="transmembrane region" description="Helical" evidence="3">
    <location>
        <begin position="123"/>
        <end position="143"/>
    </location>
</feature>
<feature type="topological domain" description="Cytoplasmic" evidence="3">
    <location>
        <begin position="144"/>
        <end position="367"/>
    </location>
</feature>
<feature type="domain" description="SH3" evidence="4">
    <location>
        <begin position="300"/>
        <end position="361"/>
    </location>
</feature>
<feature type="region of interest" description="Disordered" evidence="5">
    <location>
        <begin position="252"/>
        <end position="276"/>
    </location>
</feature>
<feature type="compositionally biased region" description="Low complexity" evidence="5">
    <location>
        <begin position="259"/>
        <end position="272"/>
    </location>
</feature>
<feature type="modified residue" description="Phosphoserine" evidence="2">
    <location>
        <position position="166"/>
    </location>
</feature>
<feature type="glycosylation site" description="N-linked (GlcNAc...) asparagine" evidence="3">
    <location>
        <position position="59"/>
    </location>
</feature>
<proteinExistence type="inferred from homology"/>
<reference key="1">
    <citation type="journal article" date="2009" name="Genome Res.">
        <title>Genome structure of a Saccharomyces cerevisiae strain widely used in bioethanol production.</title>
        <authorList>
            <person name="Argueso J.L."/>
            <person name="Carazzolle M.F."/>
            <person name="Mieczkowski P.A."/>
            <person name="Duarte F.M."/>
            <person name="Netto O.V.C."/>
            <person name="Missawa S.K."/>
            <person name="Galzerani F."/>
            <person name="Costa G.G.L."/>
            <person name="Vidal R.O."/>
            <person name="Noronha M.F."/>
            <person name="Dominska M."/>
            <person name="Andrietta M.G.S."/>
            <person name="Andrietta S.R."/>
            <person name="Cunha A.F."/>
            <person name="Gomes L.H."/>
            <person name="Tavares F.C.A."/>
            <person name="Alcarde A.R."/>
            <person name="Dietrich F.S."/>
            <person name="McCusker J.H."/>
            <person name="Petes T.D."/>
            <person name="Pereira G.A.G."/>
        </authorList>
    </citation>
    <scope>NUCLEOTIDE SEQUENCE [LARGE SCALE GENOMIC DNA]</scope>
    <source>
        <strain>JAY291</strain>
    </source>
</reference>
<sequence>MSISSKIRPTPRKPSRMATDHSFKMKNFYADPFAISSISLAIVSWVIAIGGSISSASTNESFPRFTWWGIVYQFLIICSLMLFYCFDLVDHYRIFITTSIAVAFVYNTNSATNLVYADGPKKAAASAGVILLSIINLIWILYYGGDNASPTNRWIDSFSIKGIRPSPLENSLHRARRRGNRNTTPYQNNVYNDAIRDSGYATQFDGYPQQQPSHKNYVSSTALAGFENTQPNTSEAVNLHLNTLQQRINSASNAKETNDNSNNQTNTNIGNTFDTDFSNGNTETTMGDTLGLYSDIGDDNFIYKAKALYPYDADDDDAYEISFEQNEILQVSDIEGRWWKARRANGETGIIPSNYVQLIDGPEEMHR</sequence>
<name>SHO1_YEAS2</name>
<evidence type="ECO:0000250" key="1"/>
<evidence type="ECO:0000250" key="2">
    <source>
        <dbReference type="UniProtKB" id="P40073"/>
    </source>
</evidence>
<evidence type="ECO:0000255" key="3"/>
<evidence type="ECO:0000255" key="4">
    <source>
        <dbReference type="PROSITE-ProRule" id="PRU00192"/>
    </source>
</evidence>
<evidence type="ECO:0000256" key="5">
    <source>
        <dbReference type="SAM" id="MobiDB-lite"/>
    </source>
</evidence>
<evidence type="ECO:0000305" key="6"/>